<geneLocation type="plasmid">
    <name>R6-5</name>
</geneLocation>
<gene>
    <name type="primary">psiA</name>
</gene>
<organism>
    <name type="scientific">Escherichia coli</name>
    <dbReference type="NCBI Taxonomy" id="562"/>
    <lineage>
        <taxon>Bacteria</taxon>
        <taxon>Pseudomonadati</taxon>
        <taxon>Pseudomonadota</taxon>
        <taxon>Gammaproteobacteria</taxon>
        <taxon>Enterobacterales</taxon>
        <taxon>Enterobacteriaceae</taxon>
        <taxon>Escherichia</taxon>
    </lineage>
</organism>
<proteinExistence type="predicted"/>
<accession>P17976</accession>
<protein>
    <recommendedName>
        <fullName>Protein PsiA</fullName>
    </recommendedName>
</protein>
<keyword id="KW-0614">Plasmid</keyword>
<comment type="function">
    <text>Not yet known.</text>
</comment>
<comment type="similarity">
    <text evidence="1">To PsiA protein of plasmid F.</text>
</comment>
<feature type="chain" id="PRO_0000068427" description="Protein PsiA">
    <location>
        <begin position="1"/>
        <end position="239"/>
    </location>
</feature>
<dbReference type="EMBL" id="X53082">
    <property type="protein sequence ID" value="CAA37250.1"/>
    <property type="molecule type" value="Genomic_DNA"/>
</dbReference>
<dbReference type="PIR" id="S11001">
    <property type="entry name" value="S11001"/>
</dbReference>
<dbReference type="InterPro" id="IPR009713">
    <property type="entry name" value="Uncharacterised_PsiA"/>
</dbReference>
<dbReference type="NCBIfam" id="NF010258">
    <property type="entry name" value="PRK13704.1"/>
    <property type="match status" value="1"/>
</dbReference>
<dbReference type="Pfam" id="PF06952">
    <property type="entry name" value="PsiA"/>
    <property type="match status" value="1"/>
</dbReference>
<reference key="1">
    <citation type="journal article" date="1990" name="Nucleic Acids Res.">
        <title>Nucleotide sequence of the psiA (plasmid SOS inhibition) gene located on the leading region of plasmids F and R6-5.</title>
        <authorList>
            <person name="Loh S."/>
            <person name="Skurray R.A."/>
            <person name="Celerier J."/>
            <person name="Bagdasarian M."/>
            <person name="Bailone A."/>
            <person name="Devoret R."/>
        </authorList>
    </citation>
    <scope>NUCLEOTIDE SEQUENCE [GENOMIC DNA]</scope>
</reference>
<name>PSIA2_ECOLX</name>
<sequence length="239" mass="27729">MSARSQALVPLSAEQQAAWRAVAETEKRRHQGNTLAEYPYAGAFFRCLNGSRRISLSDLRFFMPSLTAEELRGNRSQWLYAVDVLIETQGEVCLLPLPGDAAERLFPSVRFRVRERSRHKSALVMQKYSRQQAREAEQKARAYQALVAQAEIELAFHSPETVGSWHARWSDRVAEHDLETLFWQWGERFPSLAGMERWQWQDMPFWQVIAERSLAAREAGHAVREMERWMVPNKLREAA</sequence>
<evidence type="ECO:0000305" key="1"/>